<reference key="1">
    <citation type="journal article" date="2002" name="Nucleic Acids Res.">
        <title>Genome sequence of Shigella flexneri 2a: insights into pathogenicity through comparison with genomes of Escherichia coli K12 and O157.</title>
        <authorList>
            <person name="Jin Q."/>
            <person name="Yuan Z."/>
            <person name="Xu J."/>
            <person name="Wang Y."/>
            <person name="Shen Y."/>
            <person name="Lu W."/>
            <person name="Wang J."/>
            <person name="Liu H."/>
            <person name="Yang J."/>
            <person name="Yang F."/>
            <person name="Zhang X."/>
            <person name="Zhang J."/>
            <person name="Yang G."/>
            <person name="Wu H."/>
            <person name="Qu D."/>
            <person name="Dong J."/>
            <person name="Sun L."/>
            <person name="Xue Y."/>
            <person name="Zhao A."/>
            <person name="Gao Y."/>
            <person name="Zhu J."/>
            <person name="Kan B."/>
            <person name="Ding K."/>
            <person name="Chen S."/>
            <person name="Cheng H."/>
            <person name="Yao Z."/>
            <person name="He B."/>
            <person name="Chen R."/>
            <person name="Ma D."/>
            <person name="Qiang B."/>
            <person name="Wen Y."/>
            <person name="Hou Y."/>
            <person name="Yu J."/>
        </authorList>
    </citation>
    <scope>NUCLEOTIDE SEQUENCE [LARGE SCALE GENOMIC DNA]</scope>
    <source>
        <strain>301 / Serotype 2a</strain>
    </source>
</reference>
<reference key="2">
    <citation type="journal article" date="2003" name="Infect. Immun.">
        <title>Complete genome sequence and comparative genomics of Shigella flexneri serotype 2a strain 2457T.</title>
        <authorList>
            <person name="Wei J."/>
            <person name="Goldberg M.B."/>
            <person name="Burland V."/>
            <person name="Venkatesan M.M."/>
            <person name="Deng W."/>
            <person name="Fournier G."/>
            <person name="Mayhew G.F."/>
            <person name="Plunkett G. III"/>
            <person name="Rose D.J."/>
            <person name="Darling A."/>
            <person name="Mau B."/>
            <person name="Perna N.T."/>
            <person name="Payne S.M."/>
            <person name="Runyen-Janecky L.J."/>
            <person name="Zhou S."/>
            <person name="Schwartz D.C."/>
            <person name="Blattner F.R."/>
        </authorList>
    </citation>
    <scope>NUCLEOTIDE SEQUENCE [LARGE SCALE GENOMIC DNA]</scope>
    <source>
        <strain>ATCC 700930 / 2457T / Serotype 2a</strain>
    </source>
</reference>
<evidence type="ECO:0000255" key="1">
    <source>
        <dbReference type="HAMAP-Rule" id="MF_01590"/>
    </source>
</evidence>
<evidence type="ECO:0000305" key="2"/>
<protein>
    <recommendedName>
        <fullName evidence="1">tRNA U34 carboxymethyltransferase</fullName>
        <ecNumber evidence="1">2.5.1.-</ecNumber>
    </recommendedName>
</protein>
<feature type="chain" id="PRO_0000313977" description="tRNA U34 carboxymethyltransferase">
    <location>
        <begin position="1"/>
        <end position="323"/>
    </location>
</feature>
<feature type="binding site" evidence="1">
    <location>
        <position position="91"/>
    </location>
    <ligand>
        <name>carboxy-S-adenosyl-L-methionine</name>
        <dbReference type="ChEBI" id="CHEBI:134278"/>
    </ligand>
</feature>
<feature type="binding site" evidence="1">
    <location>
        <position position="105"/>
    </location>
    <ligand>
        <name>carboxy-S-adenosyl-L-methionine</name>
        <dbReference type="ChEBI" id="CHEBI:134278"/>
    </ligand>
</feature>
<feature type="binding site" evidence="1">
    <location>
        <position position="110"/>
    </location>
    <ligand>
        <name>carboxy-S-adenosyl-L-methionine</name>
        <dbReference type="ChEBI" id="CHEBI:134278"/>
    </ligand>
</feature>
<feature type="binding site" evidence="1">
    <location>
        <position position="130"/>
    </location>
    <ligand>
        <name>carboxy-S-adenosyl-L-methionine</name>
        <dbReference type="ChEBI" id="CHEBI:134278"/>
    </ligand>
</feature>
<feature type="binding site" evidence="1">
    <location>
        <begin position="152"/>
        <end position="154"/>
    </location>
    <ligand>
        <name>carboxy-S-adenosyl-L-methionine</name>
        <dbReference type="ChEBI" id="CHEBI:134278"/>
    </ligand>
</feature>
<feature type="binding site" evidence="1">
    <location>
        <begin position="181"/>
        <end position="182"/>
    </location>
    <ligand>
        <name>carboxy-S-adenosyl-L-methionine</name>
        <dbReference type="ChEBI" id="CHEBI:134278"/>
    </ligand>
</feature>
<feature type="binding site" evidence="1">
    <location>
        <position position="196"/>
    </location>
    <ligand>
        <name>carboxy-S-adenosyl-L-methionine</name>
        <dbReference type="ChEBI" id="CHEBI:134278"/>
    </ligand>
</feature>
<feature type="binding site" evidence="1">
    <location>
        <position position="200"/>
    </location>
    <ligand>
        <name>carboxy-S-adenosyl-L-methionine</name>
        <dbReference type="ChEBI" id="CHEBI:134278"/>
    </ligand>
</feature>
<feature type="binding site" evidence="1">
    <location>
        <position position="315"/>
    </location>
    <ligand>
        <name>carboxy-S-adenosyl-L-methionine</name>
        <dbReference type="ChEBI" id="CHEBI:134278"/>
    </ligand>
</feature>
<feature type="sequence conflict" description="In Ref. 2; AAP17299." evidence="2" ref="2">
    <original>C</original>
    <variation>R</variation>
    <location>
        <position position="106"/>
    </location>
</feature>
<sequence>MIDFGNFYSLIAKNHLSHWLETLPAQIANWQREQQHGLFKQWSNTVEFLPEIKPYRLDLLHSVTAESEEPLSTGQIKRIETLMRNLMPWRKGPFSLYGVNIDTEWCSDWKWDRVLPHLSDLTGRTILDVGCGSGYHMWRMIGAGAHLAVGIDPTQLFLCQFEAVRKLLGNDQRAHLLPLGIEQLPALKAFDTVFSMGVLYHRRSPLEHLWQLKDQLVNEGELVLETLVIDGDENTVLVPGDRYAQMRNVYFIPSALALKNWLKKCGFVDIRIVDVCVTTTEEQRRTEWMVTESLSDFLDPHDPSKTVEGYPAPKRAVLIARKP</sequence>
<comment type="function">
    <text evidence="1">Catalyzes carboxymethyl transfer from carboxy-S-adenosyl-L-methionine (Cx-SAM) to 5-hydroxyuridine (ho5U) to form 5-carboxymethoxyuridine (cmo5U) at position 34 in tRNAs.</text>
</comment>
<comment type="catalytic activity">
    <reaction evidence="1">
        <text>carboxy-S-adenosyl-L-methionine + 5-hydroxyuridine(34) in tRNA = 5-carboxymethoxyuridine(34) in tRNA + S-adenosyl-L-homocysteine + H(+)</text>
        <dbReference type="Rhea" id="RHEA:52848"/>
        <dbReference type="Rhea" id="RHEA-COMP:13381"/>
        <dbReference type="Rhea" id="RHEA-COMP:13383"/>
        <dbReference type="ChEBI" id="CHEBI:15378"/>
        <dbReference type="ChEBI" id="CHEBI:57856"/>
        <dbReference type="ChEBI" id="CHEBI:134278"/>
        <dbReference type="ChEBI" id="CHEBI:136877"/>
        <dbReference type="ChEBI" id="CHEBI:136879"/>
    </reaction>
</comment>
<comment type="subunit">
    <text evidence="1">Homotetramer.</text>
</comment>
<comment type="similarity">
    <text evidence="1">Belongs to the class I-like SAM-binding methyltransferase superfamily. CmoB family.</text>
</comment>
<name>CMOB_SHIFL</name>
<proteinExistence type="inferred from homology"/>
<keyword id="KW-1185">Reference proteome</keyword>
<keyword id="KW-0808">Transferase</keyword>
<keyword id="KW-0819">tRNA processing</keyword>
<dbReference type="EC" id="2.5.1.-" evidence="1"/>
<dbReference type="EMBL" id="AE005674">
    <property type="protein sequence ID" value="AAN43466.1"/>
    <property type="molecule type" value="Genomic_DNA"/>
</dbReference>
<dbReference type="EMBL" id="AE014073">
    <property type="protein sequence ID" value="AAP17299.1"/>
    <property type="molecule type" value="Genomic_DNA"/>
</dbReference>
<dbReference type="RefSeq" id="WP_000564754.1">
    <property type="nucleotide sequence ID" value="NZ_CP123365.1"/>
</dbReference>
<dbReference type="SMR" id="Q83R57"/>
<dbReference type="STRING" id="198214.SF1912"/>
<dbReference type="PaxDb" id="198214-SF1912"/>
<dbReference type="KEGG" id="sfl:SF1912"/>
<dbReference type="KEGG" id="sfx:S2002"/>
<dbReference type="PATRIC" id="fig|198214.7.peg.2282"/>
<dbReference type="HOGENOM" id="CLU_052665_0_0_6"/>
<dbReference type="Proteomes" id="UP000001006">
    <property type="component" value="Chromosome"/>
</dbReference>
<dbReference type="Proteomes" id="UP000002673">
    <property type="component" value="Chromosome"/>
</dbReference>
<dbReference type="GO" id="GO:0016765">
    <property type="term" value="F:transferase activity, transferring alkyl or aryl (other than methyl) groups"/>
    <property type="evidence" value="ECO:0007669"/>
    <property type="project" value="UniProtKB-UniRule"/>
</dbReference>
<dbReference type="GO" id="GO:0002098">
    <property type="term" value="P:tRNA wobble uridine modification"/>
    <property type="evidence" value="ECO:0007669"/>
    <property type="project" value="InterPro"/>
</dbReference>
<dbReference type="CDD" id="cd02440">
    <property type="entry name" value="AdoMet_MTases"/>
    <property type="match status" value="1"/>
</dbReference>
<dbReference type="FunFam" id="3.40.50.150:FF:000080">
    <property type="entry name" value="tRNA U34 carboxymethyltransferase"/>
    <property type="match status" value="1"/>
</dbReference>
<dbReference type="Gene3D" id="3.40.50.150">
    <property type="entry name" value="Vaccinia Virus protein VP39"/>
    <property type="match status" value="1"/>
</dbReference>
<dbReference type="HAMAP" id="MF_01590">
    <property type="entry name" value="tRNA_carboxymethyltr_CmoB"/>
    <property type="match status" value="1"/>
</dbReference>
<dbReference type="InterPro" id="IPR010017">
    <property type="entry name" value="CmoB"/>
</dbReference>
<dbReference type="InterPro" id="IPR027555">
    <property type="entry name" value="Mo5U34_MeTrfas-like"/>
</dbReference>
<dbReference type="InterPro" id="IPR029063">
    <property type="entry name" value="SAM-dependent_MTases_sf"/>
</dbReference>
<dbReference type="NCBIfam" id="NF011650">
    <property type="entry name" value="PRK15068.1"/>
    <property type="match status" value="1"/>
</dbReference>
<dbReference type="NCBIfam" id="TIGR00452">
    <property type="entry name" value="tRNA 5-methoxyuridine(34)/uridine 5-oxyacetic acid(34) synthase CmoB"/>
    <property type="match status" value="1"/>
</dbReference>
<dbReference type="PANTHER" id="PTHR43861:SF3">
    <property type="entry name" value="PUTATIVE (AFU_ORTHOLOGUE AFUA_2G14390)-RELATED"/>
    <property type="match status" value="1"/>
</dbReference>
<dbReference type="PANTHER" id="PTHR43861">
    <property type="entry name" value="TRANS-ACONITATE 2-METHYLTRANSFERASE-RELATED"/>
    <property type="match status" value="1"/>
</dbReference>
<dbReference type="Pfam" id="PF08003">
    <property type="entry name" value="Methyltransf_9"/>
    <property type="match status" value="1"/>
</dbReference>
<dbReference type="SUPFAM" id="SSF53335">
    <property type="entry name" value="S-adenosyl-L-methionine-dependent methyltransferases"/>
    <property type="match status" value="1"/>
</dbReference>
<organism>
    <name type="scientific">Shigella flexneri</name>
    <dbReference type="NCBI Taxonomy" id="623"/>
    <lineage>
        <taxon>Bacteria</taxon>
        <taxon>Pseudomonadati</taxon>
        <taxon>Pseudomonadota</taxon>
        <taxon>Gammaproteobacteria</taxon>
        <taxon>Enterobacterales</taxon>
        <taxon>Enterobacteriaceae</taxon>
        <taxon>Shigella</taxon>
    </lineage>
</organism>
<accession>Q83R57</accession>
<accession>Q7UAC4</accession>
<gene>
    <name evidence="1" type="primary">cmoB</name>
    <name type="ordered locus">SF1912</name>
    <name type="ordered locus">S2002</name>
</gene>